<organism>
    <name type="scientific">Jannaschia sp. (strain CCS1)</name>
    <dbReference type="NCBI Taxonomy" id="290400"/>
    <lineage>
        <taxon>Bacteria</taxon>
        <taxon>Pseudomonadati</taxon>
        <taxon>Pseudomonadota</taxon>
        <taxon>Alphaproteobacteria</taxon>
        <taxon>Rhodobacterales</taxon>
        <taxon>Roseobacteraceae</taxon>
        <taxon>Jannaschia</taxon>
    </lineage>
</organism>
<evidence type="ECO:0000255" key="1">
    <source>
        <dbReference type="HAMAP-Rule" id="MF_00489"/>
    </source>
</evidence>
<name>Y2168_JANSC</name>
<comment type="similarity">
    <text evidence="1">Belongs to the UPF0178 family.</text>
</comment>
<proteinExistence type="inferred from homology"/>
<reference key="1">
    <citation type="submission" date="2006-02" db="EMBL/GenBank/DDBJ databases">
        <title>Complete sequence of chromosome of Jannaschia sp. CCS1.</title>
        <authorList>
            <consortium name="US DOE Joint Genome Institute"/>
            <person name="Copeland A."/>
            <person name="Lucas S."/>
            <person name="Lapidus A."/>
            <person name="Barry K."/>
            <person name="Detter J.C."/>
            <person name="Glavina del Rio T."/>
            <person name="Hammon N."/>
            <person name="Israni S."/>
            <person name="Pitluck S."/>
            <person name="Brettin T."/>
            <person name="Bruce D."/>
            <person name="Han C."/>
            <person name="Tapia R."/>
            <person name="Gilna P."/>
            <person name="Chertkov O."/>
            <person name="Saunders E."/>
            <person name="Schmutz J."/>
            <person name="Larimer F."/>
            <person name="Land M."/>
            <person name="Kyrpides N."/>
            <person name="Lykidis A."/>
            <person name="Moran M.A."/>
            <person name="Belas R."/>
            <person name="Ye W."/>
            <person name="Buchan A."/>
            <person name="Gonzalez J.M."/>
            <person name="Schell M.A."/>
            <person name="Richardson P."/>
        </authorList>
    </citation>
    <scope>NUCLEOTIDE SEQUENCE [LARGE SCALE GENOMIC DNA]</scope>
    <source>
        <strain>CCS1</strain>
    </source>
</reference>
<feature type="chain" id="PRO_0000241815" description="UPF0178 protein Jann_2168">
    <location>
        <begin position="1"/>
        <end position="156"/>
    </location>
</feature>
<protein>
    <recommendedName>
        <fullName evidence="1">UPF0178 protein Jann_2168</fullName>
    </recommendedName>
</protein>
<sequence length="156" mass="16533">MTDETRQGRLILIDGDACPVKEEIYTCAYRHKIPVRLVAASYLRHPDHPLITMVMAGDAFDAADDVIAEAAAPGTLVVTGDILLAERCLEAGSVVLNHKGGAYTANSIGAQVATRAIMADIRAGLDGQGIGGQKPFSKADRSAFSNALETALRRLK</sequence>
<keyword id="KW-1185">Reference proteome</keyword>
<gene>
    <name type="ordered locus">Jann_2168</name>
</gene>
<accession>Q28QC7</accession>
<dbReference type="EMBL" id="CP000264">
    <property type="protein sequence ID" value="ABD55085.1"/>
    <property type="molecule type" value="Genomic_DNA"/>
</dbReference>
<dbReference type="RefSeq" id="WP_011455289.1">
    <property type="nucleotide sequence ID" value="NC_007802.1"/>
</dbReference>
<dbReference type="STRING" id="290400.Jann_2168"/>
<dbReference type="KEGG" id="jan:Jann_2168"/>
<dbReference type="eggNOG" id="COG1671">
    <property type="taxonomic scope" value="Bacteria"/>
</dbReference>
<dbReference type="HOGENOM" id="CLU_106619_2_1_5"/>
<dbReference type="OrthoDB" id="9798918at2"/>
<dbReference type="Proteomes" id="UP000008326">
    <property type="component" value="Chromosome"/>
</dbReference>
<dbReference type="HAMAP" id="MF_00489">
    <property type="entry name" value="UPF0178"/>
    <property type="match status" value="1"/>
</dbReference>
<dbReference type="InterPro" id="IPR003791">
    <property type="entry name" value="UPF0178"/>
</dbReference>
<dbReference type="NCBIfam" id="NF001095">
    <property type="entry name" value="PRK00124.1"/>
    <property type="match status" value="1"/>
</dbReference>
<dbReference type="PANTHER" id="PTHR35146">
    <property type="entry name" value="UPF0178 PROTEIN YAII"/>
    <property type="match status" value="1"/>
</dbReference>
<dbReference type="PANTHER" id="PTHR35146:SF1">
    <property type="entry name" value="UPF0178 PROTEIN YAII"/>
    <property type="match status" value="1"/>
</dbReference>
<dbReference type="Pfam" id="PF02639">
    <property type="entry name" value="DUF188"/>
    <property type="match status" value="1"/>
</dbReference>